<proteinExistence type="inferred from homology"/>
<feature type="chain" id="PRO_0000112896" description="Ornithine carbamoyltransferase">
    <location>
        <begin position="1"/>
        <end position="312"/>
    </location>
</feature>
<feature type="binding site" evidence="2">
    <location>
        <begin position="57"/>
        <end position="60"/>
    </location>
    <ligand>
        <name>carbamoyl phosphate</name>
        <dbReference type="ChEBI" id="CHEBI:58228"/>
    </ligand>
</feature>
<feature type="binding site" evidence="2">
    <location>
        <position position="84"/>
    </location>
    <ligand>
        <name>carbamoyl phosphate</name>
        <dbReference type="ChEBI" id="CHEBI:58228"/>
    </ligand>
</feature>
<feature type="binding site" evidence="2">
    <location>
        <position position="108"/>
    </location>
    <ligand>
        <name>carbamoyl phosphate</name>
        <dbReference type="ChEBI" id="CHEBI:58228"/>
    </ligand>
</feature>
<feature type="binding site" evidence="2">
    <location>
        <begin position="135"/>
        <end position="138"/>
    </location>
    <ligand>
        <name>carbamoyl phosphate</name>
        <dbReference type="ChEBI" id="CHEBI:58228"/>
    </ligand>
</feature>
<feature type="binding site" evidence="2">
    <location>
        <position position="166"/>
    </location>
    <ligand>
        <name>L-ornithine</name>
        <dbReference type="ChEBI" id="CHEBI:46911"/>
    </ligand>
</feature>
<feature type="binding site" evidence="2">
    <location>
        <position position="226"/>
    </location>
    <ligand>
        <name>L-ornithine</name>
        <dbReference type="ChEBI" id="CHEBI:46911"/>
    </ligand>
</feature>
<feature type="binding site" evidence="2">
    <location>
        <begin position="230"/>
        <end position="231"/>
    </location>
    <ligand>
        <name>L-ornithine</name>
        <dbReference type="ChEBI" id="CHEBI:46911"/>
    </ligand>
</feature>
<feature type="binding site" evidence="2">
    <location>
        <begin position="265"/>
        <end position="266"/>
    </location>
    <ligand>
        <name>carbamoyl phosphate</name>
        <dbReference type="ChEBI" id="CHEBI:58228"/>
    </ligand>
</feature>
<feature type="binding site" evidence="2">
    <location>
        <position position="293"/>
    </location>
    <ligand>
        <name>carbamoyl phosphate</name>
        <dbReference type="ChEBI" id="CHEBI:58228"/>
    </ligand>
</feature>
<comment type="function">
    <text evidence="1">Reversibly catalyzes the transfer of the carbamoyl group from carbamoyl phosphate (CP) to the N(epsilon) atom of ornithine (ORN) to produce L-citrulline.</text>
</comment>
<comment type="catalytic activity">
    <reaction evidence="2">
        <text>carbamoyl phosphate + L-ornithine = L-citrulline + phosphate + H(+)</text>
        <dbReference type="Rhea" id="RHEA:19513"/>
        <dbReference type="ChEBI" id="CHEBI:15378"/>
        <dbReference type="ChEBI" id="CHEBI:43474"/>
        <dbReference type="ChEBI" id="CHEBI:46911"/>
        <dbReference type="ChEBI" id="CHEBI:57743"/>
        <dbReference type="ChEBI" id="CHEBI:58228"/>
        <dbReference type="EC" id="2.1.3.3"/>
    </reaction>
</comment>
<comment type="pathway">
    <text evidence="2">Amino-acid biosynthesis; L-arginine biosynthesis; L-arginine from L-ornithine and carbamoyl phosphate: step 1/3.</text>
</comment>
<comment type="subcellular location">
    <subcellularLocation>
        <location evidence="2">Cytoplasm</location>
    </subcellularLocation>
</comment>
<comment type="similarity">
    <text evidence="2">Belongs to the aspartate/ornithine carbamoyltransferase superfamily. OTCase family.</text>
</comment>
<accession>Q8G2L7</accession>
<accession>G0K658</accession>
<organism>
    <name type="scientific">Brucella suis biovar 1 (strain 1330)</name>
    <dbReference type="NCBI Taxonomy" id="204722"/>
    <lineage>
        <taxon>Bacteria</taxon>
        <taxon>Pseudomonadati</taxon>
        <taxon>Pseudomonadota</taxon>
        <taxon>Alphaproteobacteria</taxon>
        <taxon>Hyphomicrobiales</taxon>
        <taxon>Brucellaceae</taxon>
        <taxon>Brucella/Ochrobactrum group</taxon>
        <taxon>Brucella</taxon>
    </lineage>
</organism>
<keyword id="KW-0028">Amino-acid biosynthesis</keyword>
<keyword id="KW-0055">Arginine biosynthesis</keyword>
<keyword id="KW-0963">Cytoplasm</keyword>
<keyword id="KW-0808">Transferase</keyword>
<sequence>MANDNGIKHFIDLSTVPATELRAILEDAKARKARLKAGEVERPYAGKVLAMIFEKPSTRTRVSFDVGMRQLGGETIMLTGSEMQLGRSEAIADTAKVLSRYVDAIMIRTTAHERMLELAEYATVPVINALTDDTHPCQIMADVLTYEEHRGPIKGKTFAWMGDGNNVLHSLVEAAARFDFNVNIATPKGSEPKSQYIDWARANGAGIMSTTDPEKAASGADCIVTDTWVSMGQEDHARGHNVFIPYQVNANLMAKADPKALFMHCLPAHRGEEVTDEVIDGPQSVVFDEAENRLHAQKAILAWCLQDRGLGA</sequence>
<evidence type="ECO:0000250" key="1"/>
<evidence type="ECO:0000255" key="2">
    <source>
        <dbReference type="HAMAP-Rule" id="MF_01109"/>
    </source>
</evidence>
<dbReference type="EC" id="2.1.3.3" evidence="2"/>
<dbReference type="EMBL" id="AE014291">
    <property type="protein sequence ID" value="AAN29251.1"/>
    <property type="molecule type" value="Genomic_DNA"/>
</dbReference>
<dbReference type="EMBL" id="CP002997">
    <property type="protein sequence ID" value="AEM17664.1"/>
    <property type="molecule type" value="Genomic_DNA"/>
</dbReference>
<dbReference type="RefSeq" id="WP_006072128.1">
    <property type="nucleotide sequence ID" value="NZ_KN046804.1"/>
</dbReference>
<dbReference type="SMR" id="Q8G2L7"/>
<dbReference type="GeneID" id="45051432"/>
<dbReference type="KEGG" id="bms:BR0302"/>
<dbReference type="KEGG" id="bsi:BS1330_I0303"/>
<dbReference type="PATRIC" id="fig|204722.21.peg.1789"/>
<dbReference type="HOGENOM" id="CLU_043846_3_2_5"/>
<dbReference type="PhylomeDB" id="Q8G2L7"/>
<dbReference type="UniPathway" id="UPA00068">
    <property type="reaction ID" value="UER00112"/>
</dbReference>
<dbReference type="Proteomes" id="UP000007104">
    <property type="component" value="Chromosome I"/>
</dbReference>
<dbReference type="GO" id="GO:0005737">
    <property type="term" value="C:cytoplasm"/>
    <property type="evidence" value="ECO:0007669"/>
    <property type="project" value="UniProtKB-SubCell"/>
</dbReference>
<dbReference type="GO" id="GO:0016597">
    <property type="term" value="F:amino acid binding"/>
    <property type="evidence" value="ECO:0007669"/>
    <property type="project" value="InterPro"/>
</dbReference>
<dbReference type="GO" id="GO:0004585">
    <property type="term" value="F:ornithine carbamoyltransferase activity"/>
    <property type="evidence" value="ECO:0007669"/>
    <property type="project" value="UniProtKB-UniRule"/>
</dbReference>
<dbReference type="GO" id="GO:0042450">
    <property type="term" value="P:arginine biosynthetic process via ornithine"/>
    <property type="evidence" value="ECO:0007669"/>
    <property type="project" value="TreeGrafter"/>
</dbReference>
<dbReference type="GO" id="GO:0019240">
    <property type="term" value="P:citrulline biosynthetic process"/>
    <property type="evidence" value="ECO:0007669"/>
    <property type="project" value="TreeGrafter"/>
</dbReference>
<dbReference type="GO" id="GO:0006526">
    <property type="term" value="P:L-arginine biosynthetic process"/>
    <property type="evidence" value="ECO:0007669"/>
    <property type="project" value="UniProtKB-UniRule"/>
</dbReference>
<dbReference type="FunFam" id="3.40.50.1370:FF:000008">
    <property type="entry name" value="Ornithine carbamoyltransferase"/>
    <property type="match status" value="1"/>
</dbReference>
<dbReference type="FunFam" id="3.40.50.1370:FF:000016">
    <property type="entry name" value="Ornithine carbamoyltransferase"/>
    <property type="match status" value="1"/>
</dbReference>
<dbReference type="Gene3D" id="3.40.50.1370">
    <property type="entry name" value="Aspartate/ornithine carbamoyltransferase"/>
    <property type="match status" value="2"/>
</dbReference>
<dbReference type="HAMAP" id="MF_01109">
    <property type="entry name" value="OTCase"/>
    <property type="match status" value="1"/>
</dbReference>
<dbReference type="InterPro" id="IPR006132">
    <property type="entry name" value="Asp/Orn_carbamoyltranf_P-bd"/>
</dbReference>
<dbReference type="InterPro" id="IPR006130">
    <property type="entry name" value="Asp/Orn_carbamoylTrfase"/>
</dbReference>
<dbReference type="InterPro" id="IPR036901">
    <property type="entry name" value="Asp/Orn_carbamoylTrfase_sf"/>
</dbReference>
<dbReference type="InterPro" id="IPR006131">
    <property type="entry name" value="Asp_carbamoyltransf_Asp/Orn-bd"/>
</dbReference>
<dbReference type="InterPro" id="IPR002292">
    <property type="entry name" value="Orn/put_carbamltrans"/>
</dbReference>
<dbReference type="InterPro" id="IPR024904">
    <property type="entry name" value="OTCase_ArgI"/>
</dbReference>
<dbReference type="NCBIfam" id="TIGR00658">
    <property type="entry name" value="orni_carb_tr"/>
    <property type="match status" value="1"/>
</dbReference>
<dbReference type="NCBIfam" id="NF001986">
    <property type="entry name" value="PRK00779.1"/>
    <property type="match status" value="1"/>
</dbReference>
<dbReference type="PANTHER" id="PTHR45753">
    <property type="entry name" value="ORNITHINE CARBAMOYLTRANSFERASE, MITOCHONDRIAL"/>
    <property type="match status" value="1"/>
</dbReference>
<dbReference type="PANTHER" id="PTHR45753:SF3">
    <property type="entry name" value="ORNITHINE TRANSCARBAMYLASE, MITOCHONDRIAL"/>
    <property type="match status" value="1"/>
</dbReference>
<dbReference type="Pfam" id="PF00185">
    <property type="entry name" value="OTCace"/>
    <property type="match status" value="1"/>
</dbReference>
<dbReference type="Pfam" id="PF02729">
    <property type="entry name" value="OTCace_N"/>
    <property type="match status" value="1"/>
</dbReference>
<dbReference type="PRINTS" id="PR00100">
    <property type="entry name" value="AOTCASE"/>
</dbReference>
<dbReference type="PRINTS" id="PR00102">
    <property type="entry name" value="OTCASE"/>
</dbReference>
<dbReference type="SUPFAM" id="SSF53671">
    <property type="entry name" value="Aspartate/ornithine carbamoyltransferase"/>
    <property type="match status" value="1"/>
</dbReference>
<dbReference type="PROSITE" id="PS00097">
    <property type="entry name" value="CARBAMOYLTRANSFERASE"/>
    <property type="match status" value="1"/>
</dbReference>
<reference key="1">
    <citation type="journal article" date="2002" name="Proc. Natl. Acad. Sci. U.S.A.">
        <title>The Brucella suis genome reveals fundamental similarities between animal and plant pathogens and symbionts.</title>
        <authorList>
            <person name="Paulsen I.T."/>
            <person name="Seshadri R."/>
            <person name="Nelson K.E."/>
            <person name="Eisen J.A."/>
            <person name="Heidelberg J.F."/>
            <person name="Read T.D."/>
            <person name="Dodson R.J."/>
            <person name="Umayam L.A."/>
            <person name="Brinkac L.M."/>
            <person name="Beanan M.J."/>
            <person name="Daugherty S.C."/>
            <person name="DeBoy R.T."/>
            <person name="Durkin A.S."/>
            <person name="Kolonay J.F."/>
            <person name="Madupu R."/>
            <person name="Nelson W.C."/>
            <person name="Ayodeji B."/>
            <person name="Kraul M."/>
            <person name="Shetty J."/>
            <person name="Malek J.A."/>
            <person name="Van Aken S.E."/>
            <person name="Riedmuller S."/>
            <person name="Tettelin H."/>
            <person name="Gill S.R."/>
            <person name="White O."/>
            <person name="Salzberg S.L."/>
            <person name="Hoover D.L."/>
            <person name="Lindler L.E."/>
            <person name="Halling S.M."/>
            <person name="Boyle S.M."/>
            <person name="Fraser C.M."/>
        </authorList>
    </citation>
    <scope>NUCLEOTIDE SEQUENCE [LARGE SCALE GENOMIC DNA]</scope>
    <source>
        <strain>1330</strain>
    </source>
</reference>
<reference key="2">
    <citation type="journal article" date="2011" name="J. Bacteriol.">
        <title>Revised genome sequence of Brucella suis 1330.</title>
        <authorList>
            <person name="Tae H."/>
            <person name="Shallom S."/>
            <person name="Settlage R."/>
            <person name="Preston D."/>
            <person name="Adams L.G."/>
            <person name="Garner H.R."/>
        </authorList>
    </citation>
    <scope>NUCLEOTIDE SEQUENCE [LARGE SCALE GENOMIC DNA]</scope>
    <source>
        <strain>1330</strain>
    </source>
</reference>
<protein>
    <recommendedName>
        <fullName evidence="2">Ornithine carbamoyltransferase</fullName>
        <shortName evidence="2">OTCase</shortName>
        <ecNumber evidence="2">2.1.3.3</ecNumber>
    </recommendedName>
</protein>
<name>OTC_BRUSU</name>
<gene>
    <name evidence="2" type="primary">argF</name>
    <name type="ordered locus">BR0302</name>
    <name type="ordered locus">BS1330_I0303</name>
</gene>